<protein>
    <recommendedName>
        <fullName evidence="1">Fatty acid metabolism regulator protein</fullName>
    </recommendedName>
</protein>
<comment type="function">
    <text evidence="1">Multifunctional regulator of fatty acid metabolism.</text>
</comment>
<comment type="subunit">
    <text evidence="1">Homodimer.</text>
</comment>
<comment type="subcellular location">
    <subcellularLocation>
        <location evidence="1">Cytoplasm</location>
    </subcellularLocation>
</comment>
<reference key="1">
    <citation type="journal article" date="2006" name="J. Bacteriol.">
        <title>Complete genome sequence of Yersinia pestis strains Antiqua and Nepal516: evidence of gene reduction in an emerging pathogen.</title>
        <authorList>
            <person name="Chain P.S.G."/>
            <person name="Hu P."/>
            <person name="Malfatti S.A."/>
            <person name="Radnedge L."/>
            <person name="Larimer F."/>
            <person name="Vergez L.M."/>
            <person name="Worsham P."/>
            <person name="Chu M.C."/>
            <person name="Andersen G.L."/>
        </authorList>
    </citation>
    <scope>NUCLEOTIDE SEQUENCE [LARGE SCALE GENOMIC DNA]</scope>
    <source>
        <strain>Antiqua</strain>
    </source>
</reference>
<organism>
    <name type="scientific">Yersinia pestis bv. Antiqua (strain Antiqua)</name>
    <dbReference type="NCBI Taxonomy" id="360102"/>
    <lineage>
        <taxon>Bacteria</taxon>
        <taxon>Pseudomonadati</taxon>
        <taxon>Pseudomonadota</taxon>
        <taxon>Gammaproteobacteria</taxon>
        <taxon>Enterobacterales</taxon>
        <taxon>Yersiniaceae</taxon>
        <taxon>Yersinia</taxon>
    </lineage>
</organism>
<feature type="chain" id="PRO_0000301518" description="Fatty acid metabolism regulator protein">
    <location>
        <begin position="1"/>
        <end position="239"/>
    </location>
</feature>
<feature type="domain" description="HTH gntR-type" evidence="1">
    <location>
        <begin position="6"/>
        <end position="74"/>
    </location>
</feature>
<feature type="DNA-binding region" description="H-T-H motif" evidence="1">
    <location>
        <begin position="34"/>
        <end position="53"/>
    </location>
</feature>
<accession>Q1C7V2</accession>
<dbReference type="EMBL" id="CP000308">
    <property type="protein sequence ID" value="ABG13470.1"/>
    <property type="molecule type" value="Genomic_DNA"/>
</dbReference>
<dbReference type="RefSeq" id="WP_002211688.1">
    <property type="nucleotide sequence ID" value="NZ_CP009906.1"/>
</dbReference>
<dbReference type="SMR" id="Q1C7V2"/>
<dbReference type="GeneID" id="96665563"/>
<dbReference type="KEGG" id="ypa:YPA_1503"/>
<dbReference type="Proteomes" id="UP000001971">
    <property type="component" value="Chromosome"/>
</dbReference>
<dbReference type="GO" id="GO:0005737">
    <property type="term" value="C:cytoplasm"/>
    <property type="evidence" value="ECO:0007669"/>
    <property type="project" value="UniProtKB-SubCell"/>
</dbReference>
<dbReference type="GO" id="GO:0003677">
    <property type="term" value="F:DNA binding"/>
    <property type="evidence" value="ECO:0007669"/>
    <property type="project" value="UniProtKB-KW"/>
</dbReference>
<dbReference type="GO" id="GO:0003700">
    <property type="term" value="F:DNA-binding transcription factor activity"/>
    <property type="evidence" value="ECO:0007669"/>
    <property type="project" value="UniProtKB-UniRule"/>
</dbReference>
<dbReference type="GO" id="GO:0000062">
    <property type="term" value="F:fatty-acyl-CoA binding"/>
    <property type="evidence" value="ECO:0007669"/>
    <property type="project" value="InterPro"/>
</dbReference>
<dbReference type="GO" id="GO:0006631">
    <property type="term" value="P:fatty acid metabolic process"/>
    <property type="evidence" value="ECO:0007669"/>
    <property type="project" value="UniProtKB-KW"/>
</dbReference>
<dbReference type="GO" id="GO:0019217">
    <property type="term" value="P:regulation of fatty acid metabolic process"/>
    <property type="evidence" value="ECO:0007669"/>
    <property type="project" value="UniProtKB-UniRule"/>
</dbReference>
<dbReference type="CDD" id="cd07377">
    <property type="entry name" value="WHTH_GntR"/>
    <property type="match status" value="1"/>
</dbReference>
<dbReference type="FunFam" id="1.10.10.10:FF:000036">
    <property type="entry name" value="Fatty acid metabolism regulator protein"/>
    <property type="match status" value="1"/>
</dbReference>
<dbReference type="Gene3D" id="1.20.120.530">
    <property type="entry name" value="GntR ligand-binding domain-like"/>
    <property type="match status" value="1"/>
</dbReference>
<dbReference type="Gene3D" id="1.10.10.10">
    <property type="entry name" value="Winged helix-like DNA-binding domain superfamily/Winged helix DNA-binding domain"/>
    <property type="match status" value="1"/>
</dbReference>
<dbReference type="HAMAP" id="MF_00696">
    <property type="entry name" value="HTH_FadR"/>
    <property type="match status" value="1"/>
</dbReference>
<dbReference type="InterPro" id="IPR014178">
    <property type="entry name" value="FA-response_TF_FadR"/>
</dbReference>
<dbReference type="InterPro" id="IPR028374">
    <property type="entry name" value="FadR_C"/>
</dbReference>
<dbReference type="InterPro" id="IPR008920">
    <property type="entry name" value="TF_FadR/GntR_C"/>
</dbReference>
<dbReference type="InterPro" id="IPR000524">
    <property type="entry name" value="Tscrpt_reg_HTH_GntR"/>
</dbReference>
<dbReference type="InterPro" id="IPR036388">
    <property type="entry name" value="WH-like_DNA-bd_sf"/>
</dbReference>
<dbReference type="InterPro" id="IPR036390">
    <property type="entry name" value="WH_DNA-bd_sf"/>
</dbReference>
<dbReference type="NCBIfam" id="TIGR02812">
    <property type="entry name" value="fadR_gamma"/>
    <property type="match status" value="1"/>
</dbReference>
<dbReference type="NCBIfam" id="NF003444">
    <property type="entry name" value="PRK04984.1"/>
    <property type="match status" value="1"/>
</dbReference>
<dbReference type="PANTHER" id="PTHR43537:SF52">
    <property type="entry name" value="FATTY ACID METABOLISM REGULATOR PROTEIN"/>
    <property type="match status" value="1"/>
</dbReference>
<dbReference type="PANTHER" id="PTHR43537">
    <property type="entry name" value="TRANSCRIPTIONAL REGULATOR, GNTR FAMILY"/>
    <property type="match status" value="1"/>
</dbReference>
<dbReference type="Pfam" id="PF07840">
    <property type="entry name" value="FadR_C"/>
    <property type="match status" value="1"/>
</dbReference>
<dbReference type="Pfam" id="PF00392">
    <property type="entry name" value="GntR"/>
    <property type="match status" value="1"/>
</dbReference>
<dbReference type="PRINTS" id="PR00035">
    <property type="entry name" value="HTHGNTR"/>
</dbReference>
<dbReference type="SMART" id="SM00345">
    <property type="entry name" value="HTH_GNTR"/>
    <property type="match status" value="1"/>
</dbReference>
<dbReference type="SUPFAM" id="SSF48008">
    <property type="entry name" value="GntR ligand-binding domain-like"/>
    <property type="match status" value="1"/>
</dbReference>
<dbReference type="SUPFAM" id="SSF46785">
    <property type="entry name" value="Winged helix' DNA-binding domain"/>
    <property type="match status" value="1"/>
</dbReference>
<dbReference type="PROSITE" id="PS50949">
    <property type="entry name" value="HTH_GNTR"/>
    <property type="match status" value="1"/>
</dbReference>
<evidence type="ECO:0000255" key="1">
    <source>
        <dbReference type="HAMAP-Rule" id="MF_00696"/>
    </source>
</evidence>
<keyword id="KW-0010">Activator</keyword>
<keyword id="KW-0963">Cytoplasm</keyword>
<keyword id="KW-0238">DNA-binding</keyword>
<keyword id="KW-0276">Fatty acid metabolism</keyword>
<keyword id="KW-0443">Lipid metabolism</keyword>
<keyword id="KW-0678">Repressor</keyword>
<keyword id="KW-0804">Transcription</keyword>
<keyword id="KW-0805">Transcription regulation</keyword>
<gene>
    <name evidence="1" type="primary">fadR</name>
    <name type="ordered locus">YPA_1503</name>
</gene>
<proteinExistence type="inferred from homology"/>
<sequence length="239" mass="26902">MVIKAQSPAGFAEEYIIESIWNNRFPPGSILPAERELSELIGVTRTTLREVLQRLARDGWLTIQHGKPTKVNNFWETSGLNILETLARLDHDSVPQLIDNLLAVRTNIATIFVRTAIRHHPEKAQEILARAKTVDDNAEAFTALDYGIFRGLAFASGNPIYGLILNGLKGLYTRVGRYYFSNPEARKLALTFYNKLSTLCDTESYDQVLECLRTYGKESGAIWHSMQGTMPSDLAEARR</sequence>
<name>FADR_YERPA</name>